<keyword id="KW-0009">Actin-binding</keyword>
<keyword id="KW-0067">ATP-binding</keyword>
<keyword id="KW-0966">Cell projection</keyword>
<keyword id="KW-0963">Cytoplasm</keyword>
<keyword id="KW-0206">Cytoskeleton</keyword>
<keyword id="KW-0547">Nucleotide-binding</keyword>
<name>ARP3_ACACA</name>
<feature type="chain" id="PRO_0000089083" description="Actin-related protein 3">
    <location>
        <begin position="1"/>
        <end position="427"/>
    </location>
</feature>
<reference key="1">
    <citation type="journal article" date="1995" name="J. Cell Biol.">
        <title>Sequences, structural models, and cellular localization of the actin-related proteins Arp2 and Arp3 from Acanthamoeba.</title>
        <authorList>
            <person name="Kelleher J.F."/>
            <person name="Atkinson S.J."/>
            <person name="Pollard T.D."/>
        </authorList>
    </citation>
    <scope>NUCLEOTIDE SEQUENCE [MRNA]</scope>
    <source>
        <strain>ATCC 30010 / Neff</strain>
    </source>
</reference>
<protein>
    <recommendedName>
        <fullName>Actin-related protein 3</fullName>
    </recommendedName>
    <alternativeName>
        <fullName>Actin-like protein 3</fullName>
    </alternativeName>
</protein>
<gene>
    <name type="primary">ARP3</name>
</gene>
<evidence type="ECO:0000250" key="1"/>
<evidence type="ECO:0000250" key="2">
    <source>
        <dbReference type="UniProtKB" id="P42528"/>
    </source>
</evidence>
<evidence type="ECO:0000305" key="3"/>
<sequence>MSRSGLPAVVIDNGTGYTKMGYAGNTEPQYIIPTAIATKGIAEDPRCRARRWWCPWAAGKNIADLDFFIGDEAYENSKVYQITMPVRHGQVENWTHMEQFWEHCIFKYLRCEPEDHHFLLTEPPLNAPENREYTAEIMFETFNVPGLYIAVQAVLALAASWTSKQVTEKTLTGTVIDSGDGVTHVIPVAEGYVIGSSIKHIPLAGRDITNFVLQLLRERNEKIPPAETLEVAKRIKETFSYVCPDIVKEFKKYDTEPDKWFKTYEGIESVGKKPYNVDVGYERFLGPEIFFNPEIFSSDFLTPLPKVVDETIQSCPIDTRRGLYKNIVLSGGSTMFKDFGKRLQRDIKRAVDYRIKRSEELSQGRIKSKAVDVKVISHHMQRFAVWFGGSMLASTPEFYKVCHTKQQYDEVGPSICRHNPVFGAMTM</sequence>
<dbReference type="EMBL" id="U29610">
    <property type="protein sequence ID" value="AAA93068.1"/>
    <property type="molecule type" value="mRNA"/>
</dbReference>
<dbReference type="SMR" id="P53490"/>
<dbReference type="VEuPathDB" id="AmoebaDB:ACA1_396540"/>
<dbReference type="GO" id="GO:0015629">
    <property type="term" value="C:actin cytoskeleton"/>
    <property type="evidence" value="ECO:0007669"/>
    <property type="project" value="UniProtKB-ARBA"/>
</dbReference>
<dbReference type="GO" id="GO:0042995">
    <property type="term" value="C:cell projection"/>
    <property type="evidence" value="ECO:0007669"/>
    <property type="project" value="UniProtKB-SubCell"/>
</dbReference>
<dbReference type="GO" id="GO:0005737">
    <property type="term" value="C:cytoplasm"/>
    <property type="evidence" value="ECO:0007669"/>
    <property type="project" value="UniProtKB-KW"/>
</dbReference>
<dbReference type="GO" id="GO:0003779">
    <property type="term" value="F:actin binding"/>
    <property type="evidence" value="ECO:0007669"/>
    <property type="project" value="UniProtKB-KW"/>
</dbReference>
<dbReference type="GO" id="GO:0005524">
    <property type="term" value="F:ATP binding"/>
    <property type="evidence" value="ECO:0007669"/>
    <property type="project" value="UniProtKB-KW"/>
</dbReference>
<dbReference type="GO" id="GO:0006909">
    <property type="term" value="P:phagocytosis"/>
    <property type="evidence" value="ECO:0007669"/>
    <property type="project" value="UniProtKB-ARBA"/>
</dbReference>
<dbReference type="CDD" id="cd10221">
    <property type="entry name" value="ASKHA_NBD_Arp3-like"/>
    <property type="match status" value="1"/>
</dbReference>
<dbReference type="FunFam" id="3.30.420.40:FF:000029">
    <property type="entry name" value="Actin-related protein 3"/>
    <property type="match status" value="1"/>
</dbReference>
<dbReference type="FunFam" id="3.90.640.10:FF:000006">
    <property type="entry name" value="Actin-related protein 3 (ARP3)"/>
    <property type="match status" value="1"/>
</dbReference>
<dbReference type="Gene3D" id="3.30.420.40">
    <property type="match status" value="2"/>
</dbReference>
<dbReference type="Gene3D" id="3.90.640.10">
    <property type="entry name" value="Actin, Chain A, domain 4"/>
    <property type="match status" value="1"/>
</dbReference>
<dbReference type="InterPro" id="IPR004000">
    <property type="entry name" value="Actin"/>
</dbReference>
<dbReference type="InterPro" id="IPR020902">
    <property type="entry name" value="Actin/actin-like_CS"/>
</dbReference>
<dbReference type="InterPro" id="IPR043129">
    <property type="entry name" value="ATPase_NBD"/>
</dbReference>
<dbReference type="PANTHER" id="PTHR11937">
    <property type="entry name" value="ACTIN"/>
    <property type="match status" value="1"/>
</dbReference>
<dbReference type="Pfam" id="PF00022">
    <property type="entry name" value="Actin"/>
    <property type="match status" value="1"/>
</dbReference>
<dbReference type="SMART" id="SM00268">
    <property type="entry name" value="ACTIN"/>
    <property type="match status" value="1"/>
</dbReference>
<dbReference type="SUPFAM" id="SSF53067">
    <property type="entry name" value="Actin-like ATPase domain"/>
    <property type="match status" value="2"/>
</dbReference>
<dbReference type="PROSITE" id="PS01132">
    <property type="entry name" value="ACTINS_ACT_LIKE"/>
    <property type="match status" value="1"/>
</dbReference>
<accession>P53490</accession>
<comment type="function">
    <text evidence="1">Functions as ATP-binding component of the Arp2/3 complex which is involved in regulation of actin polymerization and together with an activating nucleation-promoting factor (NPF) mediates the formation of branched actin networks. Seems to contact the pointed end of the daughter actin filament (By similarity).</text>
</comment>
<comment type="subunit">
    <text evidence="1">Component of the Arp2/3 complex composed of ARP2, ARP3, ARPC1B/p41-ARC, ARPC2/p34-ARC, ARPC3/p21-ARC, ARPC4/p20-ARC and ARPC5/p16-ARC.</text>
</comment>
<comment type="subcellular location">
    <subcellularLocation>
        <location evidence="2">Cytoplasm</location>
        <location evidence="2">Cytoskeleton</location>
    </subcellularLocation>
    <subcellularLocation>
        <location evidence="2">Cell projection</location>
    </subcellularLocation>
</comment>
<comment type="similarity">
    <text evidence="3">Belongs to the actin family. ARP3 subfamily.</text>
</comment>
<organism>
    <name type="scientific">Acanthamoeba castellanii</name>
    <name type="common">Amoeba</name>
    <dbReference type="NCBI Taxonomy" id="5755"/>
    <lineage>
        <taxon>Eukaryota</taxon>
        <taxon>Amoebozoa</taxon>
        <taxon>Discosea</taxon>
        <taxon>Longamoebia</taxon>
        <taxon>Centramoebida</taxon>
        <taxon>Acanthamoebidae</taxon>
        <taxon>Acanthamoeba</taxon>
    </lineage>
</organism>
<proteinExistence type="evidence at transcript level"/>